<organism>
    <name type="scientific">Gibberella zeae (strain ATCC MYA-4620 / CBS 123657 / FGSC 9075 / NRRL 31084 / PH-1)</name>
    <name type="common">Wheat head blight fungus</name>
    <name type="synonym">Fusarium graminearum</name>
    <dbReference type="NCBI Taxonomy" id="229533"/>
    <lineage>
        <taxon>Eukaryota</taxon>
        <taxon>Fungi</taxon>
        <taxon>Dikarya</taxon>
        <taxon>Ascomycota</taxon>
        <taxon>Pezizomycotina</taxon>
        <taxon>Sordariomycetes</taxon>
        <taxon>Hypocreomycetidae</taxon>
        <taxon>Hypocreales</taxon>
        <taxon>Nectriaceae</taxon>
        <taxon>Fusarium</taxon>
    </lineage>
</organism>
<proteinExistence type="evidence at protein level"/>
<dbReference type="EC" id="3.2.1.8"/>
<dbReference type="EMBL" id="AY730561">
    <property type="status" value="NOT_ANNOTATED_CDS"/>
    <property type="molecule type" value="Genomic_DNA"/>
</dbReference>
<dbReference type="EMBL" id="DS231666">
    <property type="protein sequence ID" value="ESU12536.1"/>
    <property type="molecule type" value="Genomic_DNA"/>
</dbReference>
<dbReference type="EMBL" id="HG970335">
    <property type="protein sequence ID" value="CEF83669.1"/>
    <property type="molecule type" value="Genomic_DNA"/>
</dbReference>
<dbReference type="RefSeq" id="XP_011326043.1">
    <property type="nucleotide sequence ID" value="XM_011327741.1"/>
</dbReference>
<dbReference type="SMR" id="I1RQU5"/>
<dbReference type="STRING" id="229533.I1RQU5"/>
<dbReference type="GlyCosmos" id="I1RQU5">
    <property type="glycosylation" value="1 site, No reported glycans"/>
</dbReference>
<dbReference type="GeneID" id="23553577"/>
<dbReference type="KEGG" id="fgr:FGSG_06445"/>
<dbReference type="VEuPathDB" id="FungiDB:FGRAMPH1_01G22295"/>
<dbReference type="eggNOG" id="ENOG502SHCI">
    <property type="taxonomic scope" value="Eukaryota"/>
</dbReference>
<dbReference type="HOGENOM" id="CLU_020161_1_0_1"/>
<dbReference type="InParanoid" id="I1RQU5"/>
<dbReference type="OrthoDB" id="26390at110618"/>
<dbReference type="UniPathway" id="UPA00114"/>
<dbReference type="Proteomes" id="UP000070720">
    <property type="component" value="Chromosome 4"/>
</dbReference>
<dbReference type="GO" id="GO:0005576">
    <property type="term" value="C:extracellular region"/>
    <property type="evidence" value="ECO:0007669"/>
    <property type="project" value="UniProtKB-SubCell"/>
</dbReference>
<dbReference type="GO" id="GO:0031176">
    <property type="term" value="F:endo-1,4-beta-xylanase activity"/>
    <property type="evidence" value="ECO:0007669"/>
    <property type="project" value="UniProtKB-EC"/>
</dbReference>
<dbReference type="GO" id="GO:0045493">
    <property type="term" value="P:xylan catabolic process"/>
    <property type="evidence" value="ECO:0007669"/>
    <property type="project" value="UniProtKB-UniPathway"/>
</dbReference>
<dbReference type="Gene3D" id="3.20.20.80">
    <property type="entry name" value="Glycosidases"/>
    <property type="match status" value="1"/>
</dbReference>
<dbReference type="InterPro" id="IPR044846">
    <property type="entry name" value="GH10"/>
</dbReference>
<dbReference type="InterPro" id="IPR001000">
    <property type="entry name" value="GH10_dom"/>
</dbReference>
<dbReference type="InterPro" id="IPR017853">
    <property type="entry name" value="Glycoside_hydrolase_SF"/>
</dbReference>
<dbReference type="PANTHER" id="PTHR31490:SF35">
    <property type="entry name" value="ENDO-1,4-BETA-XYLANASE"/>
    <property type="match status" value="1"/>
</dbReference>
<dbReference type="PANTHER" id="PTHR31490">
    <property type="entry name" value="GLYCOSYL HYDROLASE"/>
    <property type="match status" value="1"/>
</dbReference>
<dbReference type="Pfam" id="PF00331">
    <property type="entry name" value="Glyco_hydro_10"/>
    <property type="match status" value="1"/>
</dbReference>
<dbReference type="PRINTS" id="PR00134">
    <property type="entry name" value="GLHYDRLASE10"/>
</dbReference>
<dbReference type="SMART" id="SM00633">
    <property type="entry name" value="Glyco_10"/>
    <property type="match status" value="1"/>
</dbReference>
<dbReference type="SUPFAM" id="SSF51445">
    <property type="entry name" value="(Trans)glycosidases"/>
    <property type="match status" value="1"/>
</dbReference>
<dbReference type="PROSITE" id="PS51760">
    <property type="entry name" value="GH10_2"/>
    <property type="match status" value="1"/>
</dbReference>
<evidence type="ECO:0000250" key="1"/>
<evidence type="ECO:0000255" key="2"/>
<evidence type="ECO:0000255" key="3">
    <source>
        <dbReference type="PROSITE-ProRule" id="PRU01096"/>
    </source>
</evidence>
<evidence type="ECO:0000269" key="4">
    <source>
    </source>
</evidence>
<evidence type="ECO:0000269" key="5">
    <source>
    </source>
</evidence>
<evidence type="ECO:0000269" key="6">
    <source>
    </source>
</evidence>
<evidence type="ECO:0000269" key="7">
    <source>
    </source>
</evidence>
<evidence type="ECO:0000305" key="8"/>
<keyword id="KW-0119">Carbohydrate metabolism</keyword>
<keyword id="KW-1015">Disulfide bond</keyword>
<keyword id="KW-0325">Glycoprotein</keyword>
<keyword id="KW-0326">Glycosidase</keyword>
<keyword id="KW-0378">Hydrolase</keyword>
<keyword id="KW-0624">Polysaccharide degradation</keyword>
<keyword id="KW-1185">Reference proteome</keyword>
<keyword id="KW-0964">Secreted</keyword>
<keyword id="KW-0732">Signal</keyword>
<keyword id="KW-0843">Virulence</keyword>
<keyword id="KW-0858">Xylan degradation</keyword>
<sequence>MAWLQPTLCRKELESRQTSGLDAAMKAAGKKYFGTALTVRNDAGETNVLNTKGEFGSITPENAMKWEAIQPNRGQFNWGPADQHANAATQRGMELRCHTLVWHSQLPSWVANGNWNNQTLQQVMKDHINAVMGRYKGKCTHWDVVNEALNEDGTYRDSVFYRVIGEAFIPIAFRMVLAADPTTKLYYNDYNLEYGGAKTAGAIRITKLIQSYGLRIDGVGLQAHMTSESTPTQSTVTPSRANLASVLNSFTKLNVDVAYTELDIRMNTPANQQKLQANAAAYARMVGSCMDVKRCVGVTVWGISDKYSWVPGTFPGEGSALLWDDNFNKKPSYTSSLNTIRACWKCHRLLVSIS</sequence>
<feature type="signal peptide" evidence="2">
    <location>
        <begin position="1"/>
        <end status="unknown"/>
    </location>
</feature>
<feature type="chain" id="PRO_0000429613" description="Endo-1,4-beta-xylanase 1">
    <location>
        <begin status="unknown"/>
        <end position="354"/>
    </location>
</feature>
<feature type="domain" description="GH10" evidence="3">
    <location>
        <begin position="19"/>
        <end position="339"/>
    </location>
</feature>
<feature type="active site" description="Proton donor" evidence="1">
    <location>
        <position position="147"/>
    </location>
</feature>
<feature type="active site" description="Nucleophile" evidence="1">
    <location>
        <position position="261"/>
    </location>
</feature>
<feature type="glycosylation site" description="N-linked (GlcNAc...) asparagine" evidence="2">
    <location>
        <position position="117"/>
    </location>
</feature>
<feature type="disulfide bond" evidence="1">
    <location>
        <begin position="289"/>
        <end position="295"/>
    </location>
</feature>
<reference key="1">
    <citation type="journal article" date="2007" name="Science">
        <title>The Fusarium graminearum genome reveals a link between localized polymorphism and pathogen specialization.</title>
        <authorList>
            <person name="Cuomo C.A."/>
            <person name="Gueldener U."/>
            <person name="Xu J.-R."/>
            <person name="Trail F."/>
            <person name="Turgeon B.G."/>
            <person name="Di Pietro A."/>
            <person name="Walton J.D."/>
            <person name="Ma L.-J."/>
            <person name="Baker S.E."/>
            <person name="Rep M."/>
            <person name="Adam G."/>
            <person name="Antoniw J."/>
            <person name="Baldwin T."/>
            <person name="Calvo S.E."/>
            <person name="Chang Y.-L."/>
            <person name="DeCaprio D."/>
            <person name="Gale L.R."/>
            <person name="Gnerre S."/>
            <person name="Goswami R.S."/>
            <person name="Hammond-Kosack K."/>
            <person name="Harris L.J."/>
            <person name="Hilburn K."/>
            <person name="Kennell J.C."/>
            <person name="Kroken S."/>
            <person name="Magnuson J.K."/>
            <person name="Mannhaupt G."/>
            <person name="Mauceli E.W."/>
            <person name="Mewes H.-W."/>
            <person name="Mitterbauer R."/>
            <person name="Muehlbauer G."/>
            <person name="Muensterkoetter M."/>
            <person name="Nelson D."/>
            <person name="O'Donnell K."/>
            <person name="Ouellet T."/>
            <person name="Qi W."/>
            <person name="Quesneville H."/>
            <person name="Roncero M.I.G."/>
            <person name="Seong K.-Y."/>
            <person name="Tetko I.V."/>
            <person name="Urban M."/>
            <person name="Waalwijk C."/>
            <person name="Ward T.J."/>
            <person name="Yao J."/>
            <person name="Birren B.W."/>
            <person name="Kistler H.C."/>
        </authorList>
    </citation>
    <scope>NUCLEOTIDE SEQUENCE [LARGE SCALE GENOMIC DNA]</scope>
    <source>
        <strain>ATCC MYA-4620 / CBS 123657 / FGSC 9075 / NRRL 31084 / PH-1</strain>
    </source>
</reference>
<reference key="2">
    <citation type="journal article" date="2010" name="Nature">
        <title>Comparative genomics reveals mobile pathogenicity chromosomes in Fusarium.</title>
        <authorList>
            <person name="Ma L.-J."/>
            <person name="van der Does H.C."/>
            <person name="Borkovich K.A."/>
            <person name="Coleman J.J."/>
            <person name="Daboussi M.-J."/>
            <person name="Di Pietro A."/>
            <person name="Dufresne M."/>
            <person name="Freitag M."/>
            <person name="Grabherr M."/>
            <person name="Henrissat B."/>
            <person name="Houterman P.M."/>
            <person name="Kang S."/>
            <person name="Shim W.-B."/>
            <person name="Woloshuk C."/>
            <person name="Xie X."/>
            <person name="Xu J.-R."/>
            <person name="Antoniw J."/>
            <person name="Baker S.E."/>
            <person name="Bluhm B.H."/>
            <person name="Breakspear A."/>
            <person name="Brown D.W."/>
            <person name="Butchko R.A.E."/>
            <person name="Chapman S."/>
            <person name="Coulson R."/>
            <person name="Coutinho P.M."/>
            <person name="Danchin E.G.J."/>
            <person name="Diener A."/>
            <person name="Gale L.R."/>
            <person name="Gardiner D.M."/>
            <person name="Goff S."/>
            <person name="Hammond-Kosack K.E."/>
            <person name="Hilburn K."/>
            <person name="Hua-Van A."/>
            <person name="Jonkers W."/>
            <person name="Kazan K."/>
            <person name="Kodira C.D."/>
            <person name="Koehrsen M."/>
            <person name="Kumar L."/>
            <person name="Lee Y.-H."/>
            <person name="Li L."/>
            <person name="Manners J.M."/>
            <person name="Miranda-Saavedra D."/>
            <person name="Mukherjee M."/>
            <person name="Park G."/>
            <person name="Park J."/>
            <person name="Park S.-Y."/>
            <person name="Proctor R.H."/>
            <person name="Regev A."/>
            <person name="Ruiz-Roldan M.C."/>
            <person name="Sain D."/>
            <person name="Sakthikumar S."/>
            <person name="Sykes S."/>
            <person name="Schwartz D.C."/>
            <person name="Turgeon B.G."/>
            <person name="Wapinski I."/>
            <person name="Yoder O."/>
            <person name="Young S."/>
            <person name="Zeng Q."/>
            <person name="Zhou S."/>
            <person name="Galagan J."/>
            <person name="Cuomo C.A."/>
            <person name="Kistler H.C."/>
            <person name="Rep M."/>
        </authorList>
    </citation>
    <scope>GENOME REANNOTATION</scope>
    <source>
        <strain>ATCC MYA-4620 / CBS 123657 / FGSC 9075 / NRRL 31084 / PH-1</strain>
    </source>
</reference>
<reference key="3">
    <citation type="journal article" date="2015" name="BMC Genomics">
        <title>The completed genome sequence of the pathogenic ascomycete fungus Fusarium graminearum.</title>
        <authorList>
            <person name="King R."/>
            <person name="Urban M."/>
            <person name="Hammond-Kosack M.C.U."/>
            <person name="Hassani-Pak K."/>
            <person name="Hammond-Kosack K.E."/>
        </authorList>
    </citation>
    <scope>NUCLEOTIDE SEQUENCE [LARGE SCALE GENOMIC DNA]</scope>
    <source>
        <strain>ATCC MYA-4620 / CBS 123657 / FGSC 9075 / NRRL 31084 / PH-1</strain>
    </source>
</reference>
<reference key="4">
    <citation type="journal article" date="2006" name="Biochem. Biophys. Res. Commun.">
        <title>Fusarium graminearum on plant cell wall: no fewer than 30 xylanase genes transcribed.</title>
        <authorList>
            <person name="Hatsch D."/>
            <person name="Phalip V."/>
            <person name="Petkovski E."/>
            <person name="Jeltsch J.M."/>
        </authorList>
    </citation>
    <scope>INDUCTION</scope>
</reference>
<reference key="5">
    <citation type="journal article" date="2007" name="Curr. Genet.">
        <title>Xyr1 regulates xylanase but not cellulase formation in the head blight fungus Fusarium graminearum.</title>
        <authorList>
            <person name="Brunner K."/>
            <person name="Lichtenauer A.M."/>
            <person name="Kratochwill K."/>
            <person name="Delic M."/>
            <person name="Mach R.L."/>
        </authorList>
    </citation>
    <scope>INDUCTION</scope>
</reference>
<reference key="6">
    <citation type="journal article" date="2012" name="J. Agric. Food Chem.">
        <title>Isolation and characterization of two endoxylanases from Fusarium graminearum.</title>
        <authorList>
            <person name="Dong X."/>
            <person name="Meinhardt S.W."/>
            <person name="Schwarz P.B."/>
        </authorList>
    </citation>
    <scope>SUBCELLULAR LOCATION</scope>
    <scope>IDENTIFICATION BY MASS SPECTROMETRY</scope>
    <scope>FUNCTION</scope>
    <scope>CATALYTIC ACTIVITY</scope>
    <scope>BIOPHYSICOCHEMICAL PROPERTIES</scope>
</reference>
<reference key="7">
    <citation type="journal article" date="2013" name="Plant Physiol. Biochem.">
        <title>A Fusarium graminearum xylanase expressed during wheat infection is a necrotizing factor but is not essential for virulence.</title>
        <authorList>
            <person name="Sella L."/>
            <person name="Gazzetti K."/>
            <person name="Faoro F."/>
            <person name="Odorizzi S."/>
            <person name="D'Ovidio R."/>
            <person name="Schafer W."/>
            <person name="Favaron F."/>
        </authorList>
    </citation>
    <scope>INDUCTION</scope>
</reference>
<comment type="function">
    <text evidence="6">Endo-1,4-beta-xylanase involved in the hydrolysis of xylan, a major structural heterogeneous polysaccharide found in plant biomass representing the second most abundant polysaccharide in the biosphere, after cellulose. Plays an important role in causing fusarium head blight (FHB) on cereal crops.</text>
</comment>
<comment type="catalytic activity">
    <reaction evidence="6">
        <text>Endohydrolysis of (1-&gt;4)-beta-D-xylosidic linkages in xylans.</text>
        <dbReference type="EC" id="3.2.1.8"/>
    </reaction>
</comment>
<comment type="biophysicochemical properties">
    <kinetics>
        <KM evidence="6">0.86 mg/ml for xylan</KM>
        <KM evidence="6">1.7 mg/ml for arabinoxylan</KM>
        <Vmax evidence="6">15.9 umol/min/mg enzyme toward xylan</Vmax>
        <Vmax evidence="6">12.4 umol/min/mg enzyme toward arabinoxylan</Vmax>
    </kinetics>
    <phDependence>
        <text evidence="6">Optimum pH is 6.0.</text>
    </phDependence>
    <temperatureDependence>
        <text evidence="6">Optimum temperature is 40 degrees Celsius.</text>
    </temperatureDependence>
</comment>
<comment type="pathway">
    <text>Glycan degradation; xylan degradation.</text>
</comment>
<comment type="subcellular location">
    <subcellularLocation>
        <location evidence="6">Secreted</location>
    </subcellularLocation>
</comment>
<comment type="induction">
    <text evidence="4 5 7">Expression is under the control of transcription factor XYR1 and highly induced by xylan.</text>
</comment>
<comment type="similarity">
    <text evidence="8">Belongs to the glycosyl hydrolase 10 (cellulase F) family.</text>
</comment>
<gene>
    <name type="primary">XYL1</name>
    <name type="ORF">FGRRES_06445</name>
    <name type="ORF">FGSG_06445</name>
</gene>
<accession>I1RQU5</accession>
<accession>A0A098DQN2</accession>
<accession>A0A0E0SB56</accession>
<protein>
    <recommendedName>
        <fullName>Endo-1,4-beta-xylanase 1</fullName>
        <shortName>Xylanase 1</shortName>
        <ecNumber>3.2.1.8</ecNumber>
    </recommendedName>
    <alternativeName>
        <fullName>1,4-beta-D-xylan xylanohydrolase 1</fullName>
    </alternativeName>
</protein>
<name>XYN1_GIBZE</name>